<evidence type="ECO:0000255" key="1">
    <source>
        <dbReference type="HAMAP-Rule" id="MF_00373"/>
    </source>
</evidence>
<evidence type="ECO:0000305" key="2"/>
<organism>
    <name type="scientific">Helicobacter pylori (strain J99 / ATCC 700824)</name>
    <name type="common">Campylobacter pylori J99</name>
    <dbReference type="NCBI Taxonomy" id="85963"/>
    <lineage>
        <taxon>Bacteria</taxon>
        <taxon>Pseudomonadati</taxon>
        <taxon>Campylobacterota</taxon>
        <taxon>Epsilonproteobacteria</taxon>
        <taxon>Campylobacterales</taxon>
        <taxon>Helicobacteraceae</taxon>
        <taxon>Helicobacter</taxon>
    </lineage>
</organism>
<name>RL28_HELPJ</name>
<sequence length="62" mass="6929">MAKRCALTFKGPMIGNHVSHANNKNKRRLLPNLRSIKIQLDDGTTKRIKVAASTLRTMRKGA</sequence>
<accession>P66143</accession>
<accession>P56051</accession>
<dbReference type="EMBL" id="AE001439">
    <property type="protein sequence ID" value="AAD06021.1"/>
    <property type="molecule type" value="Genomic_DNA"/>
</dbReference>
<dbReference type="RefSeq" id="WP_001118998.1">
    <property type="nucleotide sequence ID" value="NZ_CP011330.1"/>
</dbReference>
<dbReference type="SMR" id="P66143"/>
<dbReference type="KEGG" id="hpj:jhp_0443"/>
<dbReference type="PATRIC" id="fig|85963.30.peg.562"/>
<dbReference type="eggNOG" id="COG0227">
    <property type="taxonomic scope" value="Bacteria"/>
</dbReference>
<dbReference type="Proteomes" id="UP000000804">
    <property type="component" value="Chromosome"/>
</dbReference>
<dbReference type="GO" id="GO:1990904">
    <property type="term" value="C:ribonucleoprotein complex"/>
    <property type="evidence" value="ECO:0007669"/>
    <property type="project" value="UniProtKB-KW"/>
</dbReference>
<dbReference type="GO" id="GO:0005840">
    <property type="term" value="C:ribosome"/>
    <property type="evidence" value="ECO:0007669"/>
    <property type="project" value="UniProtKB-KW"/>
</dbReference>
<dbReference type="GO" id="GO:0003735">
    <property type="term" value="F:structural constituent of ribosome"/>
    <property type="evidence" value="ECO:0007669"/>
    <property type="project" value="InterPro"/>
</dbReference>
<dbReference type="GO" id="GO:0006412">
    <property type="term" value="P:translation"/>
    <property type="evidence" value="ECO:0007669"/>
    <property type="project" value="UniProtKB-UniRule"/>
</dbReference>
<dbReference type="Gene3D" id="2.30.170.40">
    <property type="entry name" value="Ribosomal protein L28/L24"/>
    <property type="match status" value="1"/>
</dbReference>
<dbReference type="HAMAP" id="MF_00373">
    <property type="entry name" value="Ribosomal_bL28"/>
    <property type="match status" value="1"/>
</dbReference>
<dbReference type="InterPro" id="IPR050096">
    <property type="entry name" value="Bacterial_rp_bL28"/>
</dbReference>
<dbReference type="InterPro" id="IPR026569">
    <property type="entry name" value="Ribosomal_bL28"/>
</dbReference>
<dbReference type="InterPro" id="IPR034704">
    <property type="entry name" value="Ribosomal_bL28/bL31-like_sf"/>
</dbReference>
<dbReference type="InterPro" id="IPR001383">
    <property type="entry name" value="Ribosomal_bL28_bact-type"/>
</dbReference>
<dbReference type="InterPro" id="IPR037147">
    <property type="entry name" value="Ribosomal_bL28_sf"/>
</dbReference>
<dbReference type="NCBIfam" id="TIGR00009">
    <property type="entry name" value="L28"/>
    <property type="match status" value="1"/>
</dbReference>
<dbReference type="PANTHER" id="PTHR39080">
    <property type="entry name" value="50S RIBOSOMAL PROTEIN L28"/>
    <property type="match status" value="1"/>
</dbReference>
<dbReference type="PANTHER" id="PTHR39080:SF1">
    <property type="entry name" value="LARGE RIBOSOMAL SUBUNIT PROTEIN BL28A"/>
    <property type="match status" value="1"/>
</dbReference>
<dbReference type="Pfam" id="PF00830">
    <property type="entry name" value="Ribosomal_L28"/>
    <property type="match status" value="1"/>
</dbReference>
<dbReference type="SUPFAM" id="SSF143800">
    <property type="entry name" value="L28p-like"/>
    <property type="match status" value="1"/>
</dbReference>
<protein>
    <recommendedName>
        <fullName evidence="1">Large ribosomal subunit protein bL28</fullName>
    </recommendedName>
    <alternativeName>
        <fullName evidence="2">50S ribosomal protein L28</fullName>
    </alternativeName>
</protein>
<keyword id="KW-0687">Ribonucleoprotein</keyword>
<keyword id="KW-0689">Ribosomal protein</keyword>
<feature type="chain" id="PRO_0000178483" description="Large ribosomal subunit protein bL28">
    <location>
        <begin position="1"/>
        <end position="62"/>
    </location>
</feature>
<reference key="1">
    <citation type="journal article" date="1999" name="Nature">
        <title>Genomic sequence comparison of two unrelated isolates of the human gastric pathogen Helicobacter pylori.</title>
        <authorList>
            <person name="Alm R.A."/>
            <person name="Ling L.-S.L."/>
            <person name="Moir D.T."/>
            <person name="King B.L."/>
            <person name="Brown E.D."/>
            <person name="Doig P.C."/>
            <person name="Smith D.R."/>
            <person name="Noonan B."/>
            <person name="Guild B.C."/>
            <person name="deJonge B.L."/>
            <person name="Carmel G."/>
            <person name="Tummino P.J."/>
            <person name="Caruso A."/>
            <person name="Uria-Nickelsen M."/>
            <person name="Mills D.M."/>
            <person name="Ives C."/>
            <person name="Gibson R."/>
            <person name="Merberg D."/>
            <person name="Mills S.D."/>
            <person name="Jiang Q."/>
            <person name="Taylor D.E."/>
            <person name="Vovis G.F."/>
            <person name="Trust T.J."/>
        </authorList>
    </citation>
    <scope>NUCLEOTIDE SEQUENCE [LARGE SCALE GENOMIC DNA]</scope>
    <source>
        <strain>J99 / ATCC 700824</strain>
    </source>
</reference>
<gene>
    <name evidence="1" type="primary">rpmB</name>
    <name type="ordered locus">jhp_0443</name>
</gene>
<proteinExistence type="inferred from homology"/>
<comment type="similarity">
    <text evidence="1">Belongs to the bacterial ribosomal protein bL28 family.</text>
</comment>